<dbReference type="EMBL" id="ABSV01001266">
    <property type="protein sequence ID" value="EDZ71370.1"/>
    <property type="molecule type" value="Genomic_DNA"/>
</dbReference>
<dbReference type="Proteomes" id="UP000008988">
    <property type="component" value="Unassembled WGS sequence"/>
</dbReference>
<dbReference type="GO" id="GO:0005576">
    <property type="term" value="C:extracellular region"/>
    <property type="evidence" value="ECO:0007669"/>
    <property type="project" value="UniProtKB-KW"/>
</dbReference>
<dbReference type="GO" id="GO:0009277">
    <property type="term" value="C:fungal-type cell wall"/>
    <property type="evidence" value="ECO:0007669"/>
    <property type="project" value="UniProtKB-ARBA"/>
</dbReference>
<dbReference type="GO" id="GO:0005199">
    <property type="term" value="F:structural constituent of cell wall"/>
    <property type="evidence" value="ECO:0007669"/>
    <property type="project" value="InterPro"/>
</dbReference>
<dbReference type="GO" id="GO:0031505">
    <property type="term" value="P:fungal-type cell wall organization"/>
    <property type="evidence" value="ECO:0007669"/>
    <property type="project" value="TreeGrafter"/>
</dbReference>
<dbReference type="InterPro" id="IPR054508">
    <property type="entry name" value="PIR1-like_C"/>
</dbReference>
<dbReference type="InterPro" id="IPR051153">
    <property type="entry name" value="Yeast_CWMannoprotein_PIR"/>
</dbReference>
<dbReference type="InterPro" id="IPR000420">
    <property type="entry name" value="Yeast_PIR_rpt"/>
</dbReference>
<dbReference type="PANTHER" id="PTHR47254">
    <property type="entry name" value="CELL WALL MANNOPROTEIN CIS3-RELATED"/>
    <property type="match status" value="1"/>
</dbReference>
<dbReference type="PANTHER" id="PTHR47254:SF1">
    <property type="entry name" value="CELL WALL MANNOPROTEIN CIS3-RELATED"/>
    <property type="match status" value="1"/>
</dbReference>
<dbReference type="Pfam" id="PF00399">
    <property type="entry name" value="PIR"/>
    <property type="match status" value="3"/>
</dbReference>
<dbReference type="Pfam" id="PF22799">
    <property type="entry name" value="PIR1-like_C"/>
    <property type="match status" value="1"/>
</dbReference>
<dbReference type="PROSITE" id="PS00929">
    <property type="entry name" value="PIR_REPEAT_1"/>
    <property type="match status" value="4"/>
</dbReference>
<dbReference type="PROSITE" id="PS50256">
    <property type="entry name" value="PIR_REPEAT_2"/>
    <property type="match status" value="4"/>
</dbReference>
<comment type="function">
    <text evidence="1">Component of the outer cell wall layer. May be involved in meiosis and sporulation (By similarity).</text>
</comment>
<comment type="subcellular location">
    <subcellularLocation>
        <location evidence="1">Secreted</location>
        <location evidence="1">Cell wall</location>
    </subcellularLocation>
    <text evidence="1">Covalently attached to the cell wall.</text>
</comment>
<comment type="domain">
    <text evidence="1">The PIR1/2/3 repeats are required for the covalent linkage to the cell wall (By similarity). Their number varies among different strains of S.cerevisiae.</text>
</comment>
<comment type="PTM">
    <text evidence="1">Covalently linked to beta-1,3-glucan of the inner cell wall layer via an alkali-sensitive ester linkage between the gamma-carboxyl group of glutamic acids, arising from specific glutamines within the PIR1/2/3 repeats, and hydroxyl groups of glucoses of beta-1,3-glucan chains.</text>
</comment>
<comment type="similarity">
    <text evidence="3">Belongs to the PIR protein family.</text>
</comment>
<gene>
    <name type="primary">PIR5</name>
    <name type="ORF">AWRI1631_100490</name>
</gene>
<accession>B5VL25</accession>
<evidence type="ECO:0000250" key="1"/>
<evidence type="ECO:0000255" key="2"/>
<evidence type="ECO:0000305" key="3"/>
<reference key="1">
    <citation type="journal article" date="2008" name="FEMS Yeast Res.">
        <title>Comparative genome analysis of a Saccharomyces cerevisiae wine strain.</title>
        <authorList>
            <person name="Borneman A.R."/>
            <person name="Forgan A.H."/>
            <person name="Pretorius I.S."/>
            <person name="Chambers P.J."/>
        </authorList>
    </citation>
    <scope>NUCLEOTIDE SEQUENCE [LARGE SCALE GENOMIC DNA]</scope>
    <source>
        <strain>AWRI1631</strain>
    </source>
</reference>
<protein>
    <recommendedName>
        <fullName>Cell wall protein PIR5</fullName>
    </recommendedName>
    <alternativeName>
        <fullName>Protein with internal repeats 5</fullName>
    </alternativeName>
</protein>
<proteinExistence type="inferred from homology"/>
<feature type="signal peptide" evidence="2">
    <location>
        <begin position="1"/>
        <end position="21"/>
    </location>
</feature>
<feature type="propeptide" id="PRO_0000377621" evidence="1">
    <location>
        <begin position="22"/>
        <end position="62"/>
    </location>
</feature>
<feature type="chain" id="PRO_0000377743" description="Cell wall protein PIR5">
    <location>
        <begin position="63"/>
        <end position="287"/>
    </location>
</feature>
<feature type="repeat" description="PIR1/2/3 1">
    <location>
        <begin position="62"/>
        <end position="80"/>
    </location>
</feature>
<feature type="repeat" description="PIR1/2/3 2">
    <location>
        <begin position="81"/>
        <end position="99"/>
    </location>
</feature>
<feature type="repeat" description="PIR1/2/3 3">
    <location>
        <begin position="104"/>
        <end position="122"/>
    </location>
</feature>
<feature type="repeat" description="PIR1/2/3 4">
    <location>
        <begin position="144"/>
        <end position="162"/>
    </location>
</feature>
<feature type="site" description="Cleavage; by KEX2" evidence="2">
    <location>
        <begin position="62"/>
        <end position="63"/>
    </location>
</feature>
<feature type="site" description="Covalent attachment to cell wall glycan" evidence="1">
    <location>
        <position position="72"/>
    </location>
</feature>
<feature type="site" description="Covalent attachment to cell wall glycan" evidence="1">
    <location>
        <position position="91"/>
    </location>
</feature>
<feature type="site" description="Covalent attachment to cell wall glycan" evidence="1">
    <location>
        <position position="114"/>
    </location>
</feature>
<feature type="site" description="Covalent attachment to cell wall glycan" evidence="1">
    <location>
        <position position="154"/>
    </location>
</feature>
<organism>
    <name type="scientific">Saccharomyces cerevisiae (strain AWRI1631)</name>
    <name type="common">Baker's yeast</name>
    <dbReference type="NCBI Taxonomy" id="545124"/>
    <lineage>
        <taxon>Eukaryota</taxon>
        <taxon>Fungi</taxon>
        <taxon>Dikarya</taxon>
        <taxon>Ascomycota</taxon>
        <taxon>Saccharomycotina</taxon>
        <taxon>Saccharomycetes</taxon>
        <taxon>Saccharomycetales</taxon>
        <taxon>Saccharomycetaceae</taxon>
        <taxon>Saccharomyces</taxon>
    </lineage>
</organism>
<sequence>MHYKKAFLASLLSSIALTAYAPPEPWATLTPSSKMDGGTTEYRTSFGLAVIPFTVTESKVKRNVISQINDGQVQVTTQKLPHPVSQIGDGQIQVTTQKVPPVVSHIVSQIGDGQLQITTAKNVVTKSTIAVPSKTATATATSTATAVSQIHDGQVQVTISSASSSSVLSKSKLEPTKKPNNENVIKVQACKSSGTLAITLQGGVLIDSNGRIGSIVANRQFQFDGPPPQAGAIYAGGWSITKHGTLAIGDNDVFYQCLSGTFYNLYDQSIGGQCNPVHLQTVGLVDC</sequence>
<keyword id="KW-0134">Cell wall</keyword>
<keyword id="KW-0165">Cleavage on pair of basic residues</keyword>
<keyword id="KW-0677">Repeat</keyword>
<keyword id="KW-0964">Secreted</keyword>
<keyword id="KW-0732">Signal</keyword>
<name>PIR5_YEAS6</name>